<comment type="function">
    <text evidence="1">Single strand-specific metallo-endoribonuclease involved in late-stage 70S ribosome quality control and in maturation of the 3' terminus of the 16S rRNA.</text>
</comment>
<comment type="cofactor">
    <cofactor evidence="1">
        <name>Zn(2+)</name>
        <dbReference type="ChEBI" id="CHEBI:29105"/>
    </cofactor>
    <text evidence="1">Binds 1 zinc ion.</text>
</comment>
<comment type="subcellular location">
    <subcellularLocation>
        <location evidence="1">Cytoplasm</location>
    </subcellularLocation>
</comment>
<comment type="similarity">
    <text evidence="1">Belongs to the endoribonuclease YbeY family.</text>
</comment>
<sequence>MKAKINFLNQSRIKFKYLKLFRKIFKLLVEKEQITGEISLDLMLITQRKAQKLAIKFKNINYIPDVLSFPSNLIIAKKNFRLHFLGEIFMTPAKIIKQANEYGHSEEREFSYLFVHSIYHLLGFDHQDEKTNKLMDEKVENILINLGINR</sequence>
<accession>Q4A8K7</accession>
<organism>
    <name type="scientific">Mesomycoplasma hyopneumoniae (strain 7448)</name>
    <name type="common">Mycoplasma hyopneumoniae</name>
    <dbReference type="NCBI Taxonomy" id="262722"/>
    <lineage>
        <taxon>Bacteria</taxon>
        <taxon>Bacillati</taxon>
        <taxon>Mycoplasmatota</taxon>
        <taxon>Mycoplasmoidales</taxon>
        <taxon>Metamycoplasmataceae</taxon>
        <taxon>Mesomycoplasma</taxon>
    </lineage>
</organism>
<protein>
    <recommendedName>
        <fullName evidence="1">Endoribonuclease YbeY</fullName>
        <ecNumber evidence="1">3.1.-.-</ecNumber>
    </recommendedName>
</protein>
<proteinExistence type="inferred from homology"/>
<reference key="1">
    <citation type="journal article" date="2005" name="J. Bacteriol.">
        <title>Swine and poultry pathogens: the complete genome sequences of two strains of Mycoplasma hyopneumoniae and a strain of Mycoplasma synoviae.</title>
        <authorList>
            <person name="Vasconcelos A.T.R."/>
            <person name="Ferreira H.B."/>
            <person name="Bizarro C.V."/>
            <person name="Bonatto S.L."/>
            <person name="Carvalho M.O."/>
            <person name="Pinto P.M."/>
            <person name="Almeida D.F."/>
            <person name="Almeida L.G.P."/>
            <person name="Almeida R."/>
            <person name="Alves-Junior L."/>
            <person name="Assuncao E.N."/>
            <person name="Azevedo V.A.C."/>
            <person name="Bogo M.R."/>
            <person name="Brigido M.M."/>
            <person name="Brocchi M."/>
            <person name="Burity H.A."/>
            <person name="Camargo A.A."/>
            <person name="Camargo S.S."/>
            <person name="Carepo M.S."/>
            <person name="Carraro D.M."/>
            <person name="de Mattos Cascardo J.C."/>
            <person name="Castro L.A."/>
            <person name="Cavalcanti G."/>
            <person name="Chemale G."/>
            <person name="Collevatti R.G."/>
            <person name="Cunha C.W."/>
            <person name="Dallagiovanna B."/>
            <person name="Dambros B.P."/>
            <person name="Dellagostin O.A."/>
            <person name="Falcao C."/>
            <person name="Fantinatti-Garboggini F."/>
            <person name="Felipe M.S.S."/>
            <person name="Fiorentin L."/>
            <person name="Franco G.R."/>
            <person name="Freitas N.S.A."/>
            <person name="Frias D."/>
            <person name="Grangeiro T.B."/>
            <person name="Grisard E.C."/>
            <person name="Guimaraes C.T."/>
            <person name="Hungria M."/>
            <person name="Jardim S.N."/>
            <person name="Krieger M.A."/>
            <person name="Laurino J.P."/>
            <person name="Lima L.F.A."/>
            <person name="Lopes M.I."/>
            <person name="Loreto E.L.S."/>
            <person name="Madeira H.M.F."/>
            <person name="Manfio G.P."/>
            <person name="Maranhao A.Q."/>
            <person name="Martinkovics C.T."/>
            <person name="Medeiros S.R.B."/>
            <person name="Moreira M.A.M."/>
            <person name="Neiva M."/>
            <person name="Ramalho-Neto C.E."/>
            <person name="Nicolas M.F."/>
            <person name="Oliveira S.C."/>
            <person name="Paixao R.F.C."/>
            <person name="Pedrosa F.O."/>
            <person name="Pena S.D.J."/>
            <person name="Pereira M."/>
            <person name="Pereira-Ferrari L."/>
            <person name="Piffer I."/>
            <person name="Pinto L.S."/>
            <person name="Potrich D.P."/>
            <person name="Salim A.C.M."/>
            <person name="Santos F.R."/>
            <person name="Schmitt R."/>
            <person name="Schneider M.P.C."/>
            <person name="Schrank A."/>
            <person name="Schrank I.S."/>
            <person name="Schuck A.F."/>
            <person name="Seuanez H.N."/>
            <person name="Silva D.W."/>
            <person name="Silva R."/>
            <person name="Silva S.C."/>
            <person name="Soares C.M.A."/>
            <person name="Souza K.R.L."/>
            <person name="Souza R.C."/>
            <person name="Staats C.C."/>
            <person name="Steffens M.B.R."/>
            <person name="Teixeira S.M.R."/>
            <person name="Urmenyi T.P."/>
            <person name="Vainstein M.H."/>
            <person name="Zuccherato L.W."/>
            <person name="Simpson A.J.G."/>
            <person name="Zaha A."/>
        </authorList>
    </citation>
    <scope>NUCLEOTIDE SEQUENCE [LARGE SCALE GENOMIC DNA]</scope>
    <source>
        <strain>7448</strain>
    </source>
</reference>
<keyword id="KW-0963">Cytoplasm</keyword>
<keyword id="KW-0255">Endonuclease</keyword>
<keyword id="KW-0378">Hydrolase</keyword>
<keyword id="KW-0479">Metal-binding</keyword>
<keyword id="KW-0540">Nuclease</keyword>
<keyword id="KW-0690">Ribosome biogenesis</keyword>
<keyword id="KW-0698">rRNA processing</keyword>
<keyword id="KW-0862">Zinc</keyword>
<evidence type="ECO:0000255" key="1">
    <source>
        <dbReference type="HAMAP-Rule" id="MF_00009"/>
    </source>
</evidence>
<feature type="chain" id="PRO_0000284249" description="Endoribonuclease YbeY">
    <location>
        <begin position="1"/>
        <end position="150"/>
    </location>
</feature>
<feature type="binding site" evidence="1">
    <location>
        <position position="116"/>
    </location>
    <ligand>
        <name>Zn(2+)</name>
        <dbReference type="ChEBI" id="CHEBI:29105"/>
        <note>catalytic</note>
    </ligand>
</feature>
<feature type="binding site" evidence="1">
    <location>
        <position position="120"/>
    </location>
    <ligand>
        <name>Zn(2+)</name>
        <dbReference type="ChEBI" id="CHEBI:29105"/>
        <note>catalytic</note>
    </ligand>
</feature>
<feature type="binding site" evidence="1">
    <location>
        <position position="126"/>
    </location>
    <ligand>
        <name>Zn(2+)</name>
        <dbReference type="ChEBI" id="CHEBI:29105"/>
        <note>catalytic</note>
    </ligand>
</feature>
<gene>
    <name evidence="1" type="primary">ybeY</name>
    <name type="ordered locus">MHP7448_0158</name>
</gene>
<dbReference type="EC" id="3.1.-.-" evidence="1"/>
<dbReference type="EMBL" id="AE017244">
    <property type="protein sequence ID" value="AAZ53532.1"/>
    <property type="molecule type" value="Genomic_DNA"/>
</dbReference>
<dbReference type="RefSeq" id="WP_011206061.1">
    <property type="nucleotide sequence ID" value="NC_007332.1"/>
</dbReference>
<dbReference type="SMR" id="Q4A8K7"/>
<dbReference type="GeneID" id="41334456"/>
<dbReference type="KEGG" id="mhp:MHP7448_0158"/>
<dbReference type="HOGENOM" id="CLU_106710_3_0_14"/>
<dbReference type="Proteomes" id="UP000000553">
    <property type="component" value="Chromosome"/>
</dbReference>
<dbReference type="GO" id="GO:0005737">
    <property type="term" value="C:cytoplasm"/>
    <property type="evidence" value="ECO:0007669"/>
    <property type="project" value="UniProtKB-SubCell"/>
</dbReference>
<dbReference type="GO" id="GO:0004222">
    <property type="term" value="F:metalloendopeptidase activity"/>
    <property type="evidence" value="ECO:0007669"/>
    <property type="project" value="InterPro"/>
</dbReference>
<dbReference type="GO" id="GO:0004521">
    <property type="term" value="F:RNA endonuclease activity"/>
    <property type="evidence" value="ECO:0007669"/>
    <property type="project" value="UniProtKB-UniRule"/>
</dbReference>
<dbReference type="GO" id="GO:0008270">
    <property type="term" value="F:zinc ion binding"/>
    <property type="evidence" value="ECO:0007669"/>
    <property type="project" value="UniProtKB-UniRule"/>
</dbReference>
<dbReference type="GO" id="GO:0006364">
    <property type="term" value="P:rRNA processing"/>
    <property type="evidence" value="ECO:0007669"/>
    <property type="project" value="UniProtKB-UniRule"/>
</dbReference>
<dbReference type="Gene3D" id="3.40.390.30">
    <property type="entry name" value="Metalloproteases ('zincins'), catalytic domain"/>
    <property type="match status" value="1"/>
</dbReference>
<dbReference type="HAMAP" id="MF_00009">
    <property type="entry name" value="Endoribonucl_YbeY"/>
    <property type="match status" value="1"/>
</dbReference>
<dbReference type="InterPro" id="IPR023091">
    <property type="entry name" value="MetalPrtase_cat_dom_sf_prd"/>
</dbReference>
<dbReference type="InterPro" id="IPR002036">
    <property type="entry name" value="YbeY"/>
</dbReference>
<dbReference type="InterPro" id="IPR020549">
    <property type="entry name" value="YbeY_CS"/>
</dbReference>
<dbReference type="NCBIfam" id="TIGR00043">
    <property type="entry name" value="rRNA maturation RNase YbeY"/>
    <property type="match status" value="1"/>
</dbReference>
<dbReference type="PANTHER" id="PTHR46986">
    <property type="entry name" value="ENDORIBONUCLEASE YBEY, CHLOROPLASTIC"/>
    <property type="match status" value="1"/>
</dbReference>
<dbReference type="PANTHER" id="PTHR46986:SF1">
    <property type="entry name" value="ENDORIBONUCLEASE YBEY, CHLOROPLASTIC"/>
    <property type="match status" value="1"/>
</dbReference>
<dbReference type="Pfam" id="PF02130">
    <property type="entry name" value="YbeY"/>
    <property type="match status" value="1"/>
</dbReference>
<dbReference type="SUPFAM" id="SSF55486">
    <property type="entry name" value="Metalloproteases ('zincins'), catalytic domain"/>
    <property type="match status" value="1"/>
</dbReference>
<dbReference type="PROSITE" id="PS01306">
    <property type="entry name" value="UPF0054"/>
    <property type="match status" value="1"/>
</dbReference>
<name>YBEY_MESH7</name>